<gene>
    <name evidence="1" type="primary">rpsK</name>
    <name type="ordered locus">cauri_0443</name>
</gene>
<accession>C3PL36</accession>
<evidence type="ECO:0000255" key="1">
    <source>
        <dbReference type="HAMAP-Rule" id="MF_01310"/>
    </source>
</evidence>
<evidence type="ECO:0000256" key="2">
    <source>
        <dbReference type="SAM" id="MobiDB-lite"/>
    </source>
</evidence>
<evidence type="ECO:0000305" key="3"/>
<sequence length="134" mass="14219">MPPKTRSGARRGGRRVVKKNVAAGHAYIKSTFNNTIVSITDPHGAVISWASSGHVGFKGSRKSTPFAAQMAAENAARKAMDHGMKKVDVFVKGPGSGRETAIRSLQAAGLEVSSITDATPQPHNGCRPTKRRKV</sequence>
<proteinExistence type="inferred from homology"/>
<keyword id="KW-1185">Reference proteome</keyword>
<keyword id="KW-0687">Ribonucleoprotein</keyword>
<keyword id="KW-0689">Ribosomal protein</keyword>
<keyword id="KW-0694">RNA-binding</keyword>
<keyword id="KW-0699">rRNA-binding</keyword>
<dbReference type="EMBL" id="CP001601">
    <property type="protein sequence ID" value="ACP32040.1"/>
    <property type="molecule type" value="Genomic_DNA"/>
</dbReference>
<dbReference type="RefSeq" id="WP_010189540.1">
    <property type="nucleotide sequence ID" value="NZ_ACLH01000063.1"/>
</dbReference>
<dbReference type="SMR" id="C3PL36"/>
<dbReference type="STRING" id="548476.cauri_0443"/>
<dbReference type="GeneID" id="31923059"/>
<dbReference type="KEGG" id="car:cauri_0443"/>
<dbReference type="eggNOG" id="COG0100">
    <property type="taxonomic scope" value="Bacteria"/>
</dbReference>
<dbReference type="HOGENOM" id="CLU_072439_5_0_11"/>
<dbReference type="OrthoDB" id="9806415at2"/>
<dbReference type="Proteomes" id="UP000002077">
    <property type="component" value="Chromosome"/>
</dbReference>
<dbReference type="GO" id="GO:1990904">
    <property type="term" value="C:ribonucleoprotein complex"/>
    <property type="evidence" value="ECO:0007669"/>
    <property type="project" value="UniProtKB-KW"/>
</dbReference>
<dbReference type="GO" id="GO:0005840">
    <property type="term" value="C:ribosome"/>
    <property type="evidence" value="ECO:0007669"/>
    <property type="project" value="UniProtKB-KW"/>
</dbReference>
<dbReference type="GO" id="GO:0019843">
    <property type="term" value="F:rRNA binding"/>
    <property type="evidence" value="ECO:0007669"/>
    <property type="project" value="UniProtKB-UniRule"/>
</dbReference>
<dbReference type="GO" id="GO:0003735">
    <property type="term" value="F:structural constituent of ribosome"/>
    <property type="evidence" value="ECO:0007669"/>
    <property type="project" value="InterPro"/>
</dbReference>
<dbReference type="GO" id="GO:0006412">
    <property type="term" value="P:translation"/>
    <property type="evidence" value="ECO:0007669"/>
    <property type="project" value="UniProtKB-UniRule"/>
</dbReference>
<dbReference type="FunFam" id="3.30.420.80:FF:000001">
    <property type="entry name" value="30S ribosomal protein S11"/>
    <property type="match status" value="1"/>
</dbReference>
<dbReference type="Gene3D" id="3.30.420.80">
    <property type="entry name" value="Ribosomal protein S11"/>
    <property type="match status" value="1"/>
</dbReference>
<dbReference type="HAMAP" id="MF_01310">
    <property type="entry name" value="Ribosomal_uS11"/>
    <property type="match status" value="1"/>
</dbReference>
<dbReference type="InterPro" id="IPR001971">
    <property type="entry name" value="Ribosomal_uS11"/>
</dbReference>
<dbReference type="InterPro" id="IPR019981">
    <property type="entry name" value="Ribosomal_uS11_bac-type"/>
</dbReference>
<dbReference type="InterPro" id="IPR018102">
    <property type="entry name" value="Ribosomal_uS11_CS"/>
</dbReference>
<dbReference type="InterPro" id="IPR036967">
    <property type="entry name" value="Ribosomal_uS11_sf"/>
</dbReference>
<dbReference type="NCBIfam" id="NF003698">
    <property type="entry name" value="PRK05309.1"/>
    <property type="match status" value="1"/>
</dbReference>
<dbReference type="NCBIfam" id="TIGR03632">
    <property type="entry name" value="uS11_bact"/>
    <property type="match status" value="1"/>
</dbReference>
<dbReference type="PANTHER" id="PTHR11759">
    <property type="entry name" value="40S RIBOSOMAL PROTEIN S14/30S RIBOSOMAL PROTEIN S11"/>
    <property type="match status" value="1"/>
</dbReference>
<dbReference type="Pfam" id="PF00411">
    <property type="entry name" value="Ribosomal_S11"/>
    <property type="match status" value="1"/>
</dbReference>
<dbReference type="PIRSF" id="PIRSF002131">
    <property type="entry name" value="Ribosomal_S11"/>
    <property type="match status" value="1"/>
</dbReference>
<dbReference type="SUPFAM" id="SSF53137">
    <property type="entry name" value="Translational machinery components"/>
    <property type="match status" value="1"/>
</dbReference>
<dbReference type="PROSITE" id="PS00054">
    <property type="entry name" value="RIBOSOMAL_S11"/>
    <property type="match status" value="1"/>
</dbReference>
<reference key="1">
    <citation type="journal article" date="2010" name="BMC Genomics">
        <title>Complete genome sequence and lifestyle of black-pigmented Corynebacterium aurimucosum ATCC 700975 (formerly C. nigricans CN-1) isolated from a vaginal swab of a woman with spontaneous abortion.</title>
        <authorList>
            <person name="Trost E."/>
            <person name="Gotker S."/>
            <person name="Schneider J."/>
            <person name="Schneiker-Bekel S."/>
            <person name="Szczepanowski R."/>
            <person name="Tilker A."/>
            <person name="Viehoever P."/>
            <person name="Arnold W."/>
            <person name="Bekel T."/>
            <person name="Blom J."/>
            <person name="Gartemann K.H."/>
            <person name="Linke B."/>
            <person name="Goesmann A."/>
            <person name="Puhler A."/>
            <person name="Shukla S.K."/>
            <person name="Tauch A."/>
        </authorList>
    </citation>
    <scope>NUCLEOTIDE SEQUENCE [LARGE SCALE GENOMIC DNA]</scope>
    <source>
        <strain>ATCC 700975 / DSM 44827 / CIP 107346 / CN-1</strain>
    </source>
</reference>
<protein>
    <recommendedName>
        <fullName evidence="1">Small ribosomal subunit protein uS11</fullName>
    </recommendedName>
    <alternativeName>
        <fullName evidence="3">30S ribosomal protein S11</fullName>
    </alternativeName>
</protein>
<name>RS11_CORA7</name>
<organism>
    <name type="scientific">Corynebacterium aurimucosum (strain ATCC 700975 / DSM 44827 / CIP 107346 / CN-1)</name>
    <name type="common">Corynebacterium nigricans</name>
    <dbReference type="NCBI Taxonomy" id="548476"/>
    <lineage>
        <taxon>Bacteria</taxon>
        <taxon>Bacillati</taxon>
        <taxon>Actinomycetota</taxon>
        <taxon>Actinomycetes</taxon>
        <taxon>Mycobacteriales</taxon>
        <taxon>Corynebacteriaceae</taxon>
        <taxon>Corynebacterium</taxon>
    </lineage>
</organism>
<comment type="function">
    <text evidence="1">Located on the platform of the 30S subunit, it bridges several disparate RNA helices of the 16S rRNA. Forms part of the Shine-Dalgarno cleft in the 70S ribosome.</text>
</comment>
<comment type="subunit">
    <text evidence="1">Part of the 30S ribosomal subunit. Interacts with proteins S7 and S18. Binds to IF-3.</text>
</comment>
<comment type="similarity">
    <text evidence="1">Belongs to the universal ribosomal protein uS11 family.</text>
</comment>
<feature type="chain" id="PRO_1000165541" description="Small ribosomal subunit protein uS11">
    <location>
        <begin position="1"/>
        <end position="134"/>
    </location>
</feature>
<feature type="region of interest" description="Disordered" evidence="2">
    <location>
        <begin position="113"/>
        <end position="134"/>
    </location>
</feature>
<feature type="compositionally biased region" description="Polar residues" evidence="2">
    <location>
        <begin position="113"/>
        <end position="122"/>
    </location>
</feature>